<gene>
    <name type="primary">His4</name>
</gene>
<comment type="function">
    <text>Core component of nucleosome. Nucleosomes wrap and compact DNA into chromatin, limiting DNA accessibility to the cellular machineries which require DNA as a template. Histones thereby play a central role in transcription regulation, DNA repair, DNA replication and chromosomal stability. DNA accessibility is regulated via a complex set of post-translational modifications of histones, also called histone code, and nucleosome remodeling.</text>
</comment>
<comment type="subunit">
    <text>The nucleosome is a histone octamer containing two molecules each of H2A, H2B, H3 and H4 assembled in one H3-H4 heterotetramer and two H2A-H2B heterodimers. The octamer wraps approximately 147 bp of DNA.</text>
</comment>
<comment type="subcellular location">
    <subcellularLocation>
        <location evidence="1">Nucleus</location>
    </subcellularLocation>
    <subcellularLocation>
        <location evidence="1">Chromosome</location>
    </subcellularLocation>
</comment>
<comment type="similarity">
    <text evidence="4">Belongs to the histone H4 family.</text>
</comment>
<keyword id="KW-0007">Acetylation</keyword>
<keyword id="KW-0158">Chromosome</keyword>
<keyword id="KW-0238">DNA-binding</keyword>
<keyword id="KW-0488">Methylation</keyword>
<keyword id="KW-0544">Nucleosome core</keyword>
<keyword id="KW-0539">Nucleus</keyword>
<dbReference type="EMBL" id="X56335">
    <property type="protein sequence ID" value="CAA39772.1"/>
    <property type="molecule type" value="Genomic_DNA"/>
</dbReference>
<dbReference type="EMBL" id="X72803">
    <property type="protein sequence ID" value="CAA51323.1"/>
    <property type="molecule type" value="Genomic_DNA"/>
</dbReference>
<dbReference type="PIR" id="B56580">
    <property type="entry name" value="B56580"/>
</dbReference>
<dbReference type="SMR" id="P84046"/>
<dbReference type="GO" id="GO:0000786">
    <property type="term" value="C:nucleosome"/>
    <property type="evidence" value="ECO:0000250"/>
    <property type="project" value="UniProtKB"/>
</dbReference>
<dbReference type="GO" id="GO:0005634">
    <property type="term" value="C:nucleus"/>
    <property type="evidence" value="ECO:0007669"/>
    <property type="project" value="UniProtKB-SubCell"/>
</dbReference>
<dbReference type="GO" id="GO:0003677">
    <property type="term" value="F:DNA binding"/>
    <property type="evidence" value="ECO:0000250"/>
    <property type="project" value="UniProtKB"/>
</dbReference>
<dbReference type="GO" id="GO:0046982">
    <property type="term" value="F:protein heterodimerization activity"/>
    <property type="evidence" value="ECO:0007669"/>
    <property type="project" value="InterPro"/>
</dbReference>
<dbReference type="GO" id="GO:0030527">
    <property type="term" value="F:structural constituent of chromatin"/>
    <property type="evidence" value="ECO:0007669"/>
    <property type="project" value="InterPro"/>
</dbReference>
<dbReference type="GO" id="GO:0006334">
    <property type="term" value="P:nucleosome assembly"/>
    <property type="evidence" value="ECO:0000250"/>
    <property type="project" value="UniProtKB"/>
</dbReference>
<dbReference type="CDD" id="cd22912">
    <property type="entry name" value="HFD_H4"/>
    <property type="match status" value="1"/>
</dbReference>
<dbReference type="FunFam" id="1.10.20.10:FF:000002">
    <property type="entry name" value="Histone H4"/>
    <property type="match status" value="1"/>
</dbReference>
<dbReference type="Gene3D" id="1.10.20.10">
    <property type="entry name" value="Histone, subunit A"/>
    <property type="match status" value="1"/>
</dbReference>
<dbReference type="InterPro" id="IPR035425">
    <property type="entry name" value="CENP-T/H4_C"/>
</dbReference>
<dbReference type="InterPro" id="IPR009072">
    <property type="entry name" value="Histone-fold"/>
</dbReference>
<dbReference type="InterPro" id="IPR001951">
    <property type="entry name" value="Histone_H4"/>
</dbReference>
<dbReference type="InterPro" id="IPR019809">
    <property type="entry name" value="Histone_H4_CS"/>
</dbReference>
<dbReference type="InterPro" id="IPR004823">
    <property type="entry name" value="TAF_TATA-bd_Histone-like_dom"/>
</dbReference>
<dbReference type="PANTHER" id="PTHR10484">
    <property type="entry name" value="HISTONE H4"/>
    <property type="match status" value="1"/>
</dbReference>
<dbReference type="Pfam" id="PF15511">
    <property type="entry name" value="CENP-T_C"/>
    <property type="match status" value="1"/>
</dbReference>
<dbReference type="PRINTS" id="PR00623">
    <property type="entry name" value="HISTONEH4"/>
</dbReference>
<dbReference type="SMART" id="SM00417">
    <property type="entry name" value="H4"/>
    <property type="match status" value="1"/>
</dbReference>
<dbReference type="SMART" id="SM00803">
    <property type="entry name" value="TAF"/>
    <property type="match status" value="1"/>
</dbReference>
<dbReference type="SUPFAM" id="SSF47113">
    <property type="entry name" value="Histone-fold"/>
    <property type="match status" value="1"/>
</dbReference>
<dbReference type="PROSITE" id="PS00047">
    <property type="entry name" value="HISTONE_H4"/>
    <property type="match status" value="1"/>
</dbReference>
<reference key="1">
    <citation type="journal article" date="1990" name="J. Mol. Biol.">
        <title>New foldback transposable element TFB1 found in histone genes of the midge Chironomus thummi.</title>
        <authorList>
            <person name="Hankeln T."/>
            <person name="Schmidt E.R."/>
        </authorList>
    </citation>
    <scope>NUCLEOTIDE SEQUENCE [GENOMIC DNA]</scope>
</reference>
<reference key="2">
    <citation type="journal article" date="1991" name="Chromosoma">
        <title>The organization, localization and nucleotide sequence of the histone genes of the midge Chironomus thummi.</title>
        <authorList>
            <person name="Hankeln T."/>
            <person name="Schmidt E.R."/>
        </authorList>
    </citation>
    <scope>NUCLEOTIDE SEQUENCE [GENOMIC DNA]</scope>
</reference>
<reference key="3">
    <citation type="journal article" date="1993" name="J. Mol. Biol.">
        <title>Divergent evolution of an 'orphon' histone gene cluster in Chironomus.</title>
        <authorList>
            <person name="Hankeln T."/>
            <person name="Schmidt E.R."/>
        </authorList>
    </citation>
    <scope>NUCLEOTIDE SEQUENCE [GENOMIC DNA]</scope>
</reference>
<protein>
    <recommendedName>
        <fullName>Histone H4</fullName>
    </recommendedName>
</protein>
<evidence type="ECO:0000250" key="1"/>
<evidence type="ECO:0000250" key="2">
    <source>
        <dbReference type="UniProtKB" id="P62805"/>
    </source>
</evidence>
<evidence type="ECO:0000256" key="3">
    <source>
        <dbReference type="SAM" id="MobiDB-lite"/>
    </source>
</evidence>
<evidence type="ECO:0000305" key="4"/>
<name>H4_CHITH</name>
<accession>P84046</accession>
<accession>P02307</accession>
<accession>Q9VFH7</accession>
<organism>
    <name type="scientific">Chironomus thummi thummi</name>
    <name type="common">Midge</name>
    <dbReference type="NCBI Taxonomy" id="7155"/>
    <lineage>
        <taxon>Eukaryota</taxon>
        <taxon>Metazoa</taxon>
        <taxon>Ecdysozoa</taxon>
        <taxon>Arthropoda</taxon>
        <taxon>Hexapoda</taxon>
        <taxon>Insecta</taxon>
        <taxon>Pterygota</taxon>
        <taxon>Neoptera</taxon>
        <taxon>Endopterygota</taxon>
        <taxon>Diptera</taxon>
        <taxon>Nematocera</taxon>
        <taxon>Chironomoidea</taxon>
        <taxon>Chironomidae</taxon>
        <taxon>Chironominae</taxon>
        <taxon>Chironomus</taxon>
    </lineage>
</organism>
<feature type="initiator methionine" description="Removed" evidence="1">
    <location>
        <position position="1"/>
    </location>
</feature>
<feature type="chain" id="PRO_0000158298" description="Histone H4">
    <location>
        <begin position="2"/>
        <end position="103"/>
    </location>
</feature>
<feature type="DNA-binding region">
    <location>
        <begin position="17"/>
        <end position="21"/>
    </location>
</feature>
<feature type="region of interest" description="Disordered" evidence="3">
    <location>
        <begin position="1"/>
        <end position="20"/>
    </location>
</feature>
<feature type="compositionally biased region" description="Gly residues" evidence="3">
    <location>
        <begin position="1"/>
        <end position="14"/>
    </location>
</feature>
<feature type="modified residue" description="N6-acetyl-N6-methyllysine; alternate" evidence="2">
    <location>
        <position position="6"/>
    </location>
</feature>
<feature type="modified residue" description="N6-acetyl-N6-methyllysine; alternate" evidence="2">
    <location>
        <position position="13"/>
    </location>
</feature>
<sequence>MTGRGKGGKGLGKGGAKRHRKVLRDNIQGITKPAIRRLARRGGVKRISGLIYEETRGVLKVFLENVIRDAVTYTEHAKRKTVTAMDVVYALKRQGRTLYGFGG</sequence>
<proteinExistence type="inferred from homology"/>